<evidence type="ECO:0000250" key="1"/>
<evidence type="ECO:0000255" key="2">
    <source>
        <dbReference type="PROSITE-ProRule" id="PRU00169"/>
    </source>
</evidence>
<evidence type="ECO:0000305" key="3"/>
<keyword id="KW-0010">Activator</keyword>
<keyword id="KW-0963">Cytoplasm</keyword>
<keyword id="KW-0238">DNA-binding</keyword>
<keyword id="KW-0597">Phosphoprotein</keyword>
<keyword id="KW-1185">Reference proteome</keyword>
<keyword id="KW-0804">Transcription</keyword>
<keyword id="KW-0805">Transcription regulation</keyword>
<keyword id="KW-0902">Two-component regulatory system</keyword>
<reference key="1">
    <citation type="journal article" date="2002" name="Proc. Natl. Acad. Sci. U.S.A.">
        <title>Extensive mosaic structure revealed by the complete genome sequence of uropathogenic Escherichia coli.</title>
        <authorList>
            <person name="Welch R.A."/>
            <person name="Burland V."/>
            <person name="Plunkett G. III"/>
            <person name="Redford P."/>
            <person name="Roesch P."/>
            <person name="Rasko D."/>
            <person name="Buckles E.L."/>
            <person name="Liou S.-R."/>
            <person name="Boutin A."/>
            <person name="Hackett J."/>
            <person name="Stroud D."/>
            <person name="Mayhew G.F."/>
            <person name="Rose D.J."/>
            <person name="Zhou S."/>
            <person name="Schwartz D.C."/>
            <person name="Perna N.T."/>
            <person name="Mobley H.L.T."/>
            <person name="Donnenberg M.S."/>
            <person name="Blattner F.R."/>
        </authorList>
    </citation>
    <scope>NUCLEOTIDE SEQUENCE [LARGE SCALE GENOMIC DNA]</scope>
    <source>
        <strain>CFT073 / ATCC 700928 / UPEC</strain>
    </source>
</reference>
<comment type="function">
    <text evidence="1">Member of the two-component regulatory system DcuR/DcuS. Involved in the C4-dicarboxylate-stimulated regulation of the genes encoding the anaerobic fumarate respiratory system (frdABCD; nuoAN; dcuB; dcuC; sdhCDAB; etc.). Weakly regulates the aerobic C4-dicarboxylate transporter dctA (By similarity).</text>
</comment>
<comment type="subcellular location">
    <subcellularLocation>
        <location evidence="3">Cytoplasm</location>
    </subcellularLocation>
</comment>
<comment type="PTM">
    <text evidence="1">Phosphorylated and activated by DcuS.</text>
</comment>
<gene>
    <name type="primary">dcuR</name>
    <name type="ordered locus">c5130</name>
</gene>
<feature type="chain" id="PRO_0000081096" description="Transcriptional regulatory protein DcuR">
    <location>
        <begin position="1"/>
        <end position="239"/>
    </location>
</feature>
<feature type="domain" description="Response regulatory" evidence="2">
    <location>
        <begin position="3"/>
        <end position="121"/>
    </location>
</feature>
<feature type="DNA-binding region" description="H-T-H motif" evidence="1">
    <location>
        <begin position="181"/>
        <end position="200"/>
    </location>
</feature>
<feature type="modified residue" description="4-aspartylphosphate" evidence="2">
    <location>
        <position position="56"/>
    </location>
</feature>
<organism>
    <name type="scientific">Escherichia coli O6:H1 (strain CFT073 / ATCC 700928 / UPEC)</name>
    <dbReference type="NCBI Taxonomy" id="199310"/>
    <lineage>
        <taxon>Bacteria</taxon>
        <taxon>Pseudomonadati</taxon>
        <taxon>Pseudomonadota</taxon>
        <taxon>Gammaproteobacteria</taxon>
        <taxon>Enterobacterales</taxon>
        <taxon>Enterobacteriaceae</taxon>
        <taxon>Escherichia</taxon>
    </lineage>
</organism>
<dbReference type="EMBL" id="AE014075">
    <property type="protein sequence ID" value="AAN83552.1"/>
    <property type="molecule type" value="Genomic_DNA"/>
</dbReference>
<dbReference type="RefSeq" id="WP_000611291.1">
    <property type="nucleotide sequence ID" value="NZ_CP051263.1"/>
</dbReference>
<dbReference type="SMR" id="P59338"/>
<dbReference type="STRING" id="199310.c5130"/>
<dbReference type="KEGG" id="ecc:c5130"/>
<dbReference type="eggNOG" id="COG4565">
    <property type="taxonomic scope" value="Bacteria"/>
</dbReference>
<dbReference type="HOGENOM" id="CLU_000445_39_0_6"/>
<dbReference type="BioCyc" id="ECOL199310:C5130-MONOMER"/>
<dbReference type="Proteomes" id="UP000001410">
    <property type="component" value="Chromosome"/>
</dbReference>
<dbReference type="GO" id="GO:0005737">
    <property type="term" value="C:cytoplasm"/>
    <property type="evidence" value="ECO:0007669"/>
    <property type="project" value="UniProtKB-SubCell"/>
</dbReference>
<dbReference type="GO" id="GO:0003677">
    <property type="term" value="F:DNA binding"/>
    <property type="evidence" value="ECO:0007669"/>
    <property type="project" value="UniProtKB-KW"/>
</dbReference>
<dbReference type="GO" id="GO:0003700">
    <property type="term" value="F:DNA-binding transcription factor activity"/>
    <property type="evidence" value="ECO:0007669"/>
    <property type="project" value="InterPro"/>
</dbReference>
<dbReference type="GO" id="GO:0000156">
    <property type="term" value="F:phosphorelay response regulator activity"/>
    <property type="evidence" value="ECO:0007669"/>
    <property type="project" value="TreeGrafter"/>
</dbReference>
<dbReference type="CDD" id="cd19925">
    <property type="entry name" value="REC_citrate_TCS"/>
    <property type="match status" value="1"/>
</dbReference>
<dbReference type="Gene3D" id="3.40.50.2300">
    <property type="match status" value="1"/>
</dbReference>
<dbReference type="InterPro" id="IPR051271">
    <property type="entry name" value="2C-system_Tx_regulators"/>
</dbReference>
<dbReference type="InterPro" id="IPR011006">
    <property type="entry name" value="CheY-like_superfamily"/>
</dbReference>
<dbReference type="InterPro" id="IPR024187">
    <property type="entry name" value="Sig_transdc_resp-reg_cit/mal"/>
</dbReference>
<dbReference type="InterPro" id="IPR001789">
    <property type="entry name" value="Sig_transdc_resp-reg_receiver"/>
</dbReference>
<dbReference type="NCBIfam" id="NF007750">
    <property type="entry name" value="PRK10430.1"/>
    <property type="match status" value="1"/>
</dbReference>
<dbReference type="PANTHER" id="PTHR45526:SF1">
    <property type="entry name" value="TRANSCRIPTIONAL REGULATORY PROTEIN DCUR-RELATED"/>
    <property type="match status" value="1"/>
</dbReference>
<dbReference type="PANTHER" id="PTHR45526">
    <property type="entry name" value="TRANSCRIPTIONAL REGULATORY PROTEIN DPIA"/>
    <property type="match status" value="1"/>
</dbReference>
<dbReference type="Pfam" id="PF00072">
    <property type="entry name" value="Response_reg"/>
    <property type="match status" value="1"/>
</dbReference>
<dbReference type="PIRSF" id="PIRSF006171">
    <property type="entry name" value="RR_citrat_malat"/>
    <property type="match status" value="1"/>
</dbReference>
<dbReference type="SMART" id="SM00448">
    <property type="entry name" value="REC"/>
    <property type="match status" value="1"/>
</dbReference>
<dbReference type="SUPFAM" id="SSF52172">
    <property type="entry name" value="CheY-like"/>
    <property type="match status" value="1"/>
</dbReference>
<dbReference type="PROSITE" id="PS50110">
    <property type="entry name" value="RESPONSE_REGULATORY"/>
    <property type="match status" value="1"/>
</dbReference>
<accession>P59338</accession>
<name>DCUR_ECOL6</name>
<proteinExistence type="inferred from homology"/>
<protein>
    <recommendedName>
        <fullName>Transcriptional regulatory protein DcuR</fullName>
    </recommendedName>
</protein>
<sequence length="239" mass="27516">MINVLIIDDDAMVAELNRRYVAQIPGFQCCGTASTLEKAKEIIFNSDTPIDLILLDIYMQKENGLDLLPVLHNARCKSDVIVISSAADAVTIKDSLHYGVVDYLIKPFQASRFEEALTGWRQKKMALEKHQYYDQAELDQLIHGSSSNEQDPRRLPKGLTPQTLRTLCQWIDAHQDYEFSTDELANEVNISRVSCRKYLIWLVNCHILFTSIHYGVTGRPVYRYRIQAEHYSLLKQYCQ</sequence>